<feature type="chain" id="PRO_0000368048" description="RNA-directed RNA polymerase">
    <location>
        <begin position="1"/>
        <end position="1088"/>
    </location>
</feature>
<feature type="domain" description="RdRp catalytic" evidence="2">
    <location>
        <begin position="501"/>
        <end position="687"/>
    </location>
</feature>
<proteinExistence type="evidence at transcript level"/>
<organismHost>
    <name type="scientific">Sus scrofa</name>
    <name type="common">Pig</name>
    <dbReference type="NCBI Taxonomy" id="9823"/>
</organismHost>
<sequence>MGKYNLILSEYLSFVYNSQSAVQIPIYYSSNSELEKRCIDFHAKCVDNSKKGLSLSSLFEEYKDVIDNATLLSILSYSYDKYNAVERKLINYAKGKPLEADLTANELDYENNKITSELFKSAEEYTDSLMDPAILTSISSNLNAVMFWLERHSNDVGDANKVYRRRLDLFIIVASTINKYGVPRHNEKYRYEYEVMKDKPYYLVTWANSAIEMLMSVFSHEDYLIAKELIILSYSNRSTLAKLVSSPMSILVALIDINGTFITNEELELEFSDKYVKAIVPDQTFNELQEMIDNMKKAGLVDIPRMIQEWLVDCSLEKFTLMSKIYSWSFHVGFRKQKMIDAALDQLKTEYTEDVDNEMYNEYTMLIRDEIVKMLEVPVKHDDHLLRDSELAGLLSMSSASNGESRQLKFGRKTIFSTKKNMHVMDDIAHGRYTPGVIPPVNVDRPIPLGRRDVPGRRTRIIFILPYEYNSAQHAVVEKMLSYAKHTREYAEFYSQSNQLLSYGDVTRFLSSNSMVLYTDVSQWDSSQHNTQPFRKGIIMGLDMLANMTNDPKVVQTLNLYKQTQINLMDSYVQIPDGNVIKKIQYGAVASGEKQTKAANSIANLALIKTVLSRIANKYSFITKIIRVDGDDNYAVLQFNTDVTKQMVQEVSNDVRYIYSRMNAKVKALVSTVGIEIAKRYIAGGKIFFRAGINLLNNEKRGQSTQWDQAAILYSNYIVNKLRGFDTDREFILTKIIQMTSVAITGSLRLFPSERVLTTNSTFKVFDSEDFIIEYGTTDDEVYIQRAFMSLSSQKSGIADEIASSQTFKNYVSKLSDQLLVSKNAIVSKGIAVTEKAKLNSYAPVYLEKRRAQISALLTMLQKPVSFKSNKITINDILRDIKPFFVTTEAKLPIQYRKFMPTLPDNVQYVIQCIGSRTYQIEDSGSKSSISKLISKYSVYKPSIEELYKVISLREQEIQLYLVSLGVPPVDAGTYVGSRIYSQDKYKILESYVYNLLSINYGCYQLFDFNSPDLEKLIRIPFKGKIPAVTFILHLYAKLEIINYAIKNKSWISLFCNYPKSEMIKLWKKMWNITALRSPYTSANFFQD</sequence>
<accession>Q85036</accession>
<keyword id="KW-0460">Magnesium</keyword>
<keyword id="KW-0547">Nucleotide-binding</keyword>
<keyword id="KW-0548">Nucleotidyltransferase</keyword>
<keyword id="KW-0694">RNA-binding</keyword>
<keyword id="KW-0696">RNA-directed RNA polymerase</keyword>
<keyword id="KW-0808">Transferase</keyword>
<keyword id="KW-0693">Viral RNA replication</keyword>
<keyword id="KW-0946">Virion</keyword>
<reference key="1">
    <citation type="journal article" date="1994" name="Res. Virol.">
        <title>Amino acid sequence of the porcine rotavirus YM VP1 protein.</title>
        <authorList>
            <person name="Almanza L."/>
            <person name="Arias C.F."/>
            <person name="Lopez S."/>
        </authorList>
    </citation>
    <scope>NUCLEOTIDE SEQUENCE [MRNA]</scope>
</reference>
<comment type="function">
    <text evidence="2">RNA-directed RNA polymerase that is involved in both transcription and genome replication. Together with VP3 capping enzyme, forms an enzyme complex positioned near the channels situated at each of the five-fold vertices of the core. Following infection, the outermost layer of the virus is lost, leaving a double-layered particle (DLP) made up of the core and VP6 shell. VP1 then catalyzes the transcription of fully conservative plus-strand genomic RNAs that are extruded through the DLP's channels into the cytoplasm where they function as mRNAs for translation of viral proteins. One copy of each of the viral (+)RNAs is also recruited during core assembly, together with newly synthesized polymerase complexes and VP2. The polymerase of these novo-formed particles catalyzes the synthesis of complementary minus-strands leading to dsRNA formation. To do so, the polymerase specifically recognizes and binds 4 bases 5'-UGUG-3' in the conserved 3'-sequence of plus-strand RNA templates. VP2 presumably activates the autoinhibited VP1-RNA complex to coordinate packaging and genome replication. Once dsRNA synthesis is complete, the polymerase switches to the transcriptional mode, thus providing secondary transcription (By similarity).</text>
</comment>
<comment type="catalytic activity">
    <reaction evidence="2">
        <text>RNA(n) + a ribonucleoside 5'-triphosphate = RNA(n+1) + diphosphate</text>
        <dbReference type="Rhea" id="RHEA:21248"/>
        <dbReference type="Rhea" id="RHEA-COMP:14527"/>
        <dbReference type="Rhea" id="RHEA-COMP:17342"/>
        <dbReference type="ChEBI" id="CHEBI:33019"/>
        <dbReference type="ChEBI" id="CHEBI:61557"/>
        <dbReference type="ChEBI" id="CHEBI:140395"/>
        <dbReference type="EC" id="2.7.7.48"/>
    </reaction>
</comment>
<comment type="cofactor">
    <cofactor evidence="3">
        <name>Mg(2+)</name>
        <dbReference type="ChEBI" id="CHEBI:18420"/>
    </cofactor>
</comment>
<comment type="subunit">
    <text evidence="1 3">Interacts with VP3 (Potential). Interacts with VP2; this interaction activates VP1. Interacts with NSP5; this interaction is probably necessary for the formation of functional virus factories. Interacts with NSP2; this interaction is weak (By similarity).</text>
</comment>
<comment type="subcellular location">
    <subcellularLocation>
        <location evidence="3">Virion</location>
    </subcellularLocation>
    <text evidence="1">Attached inside the inner capsid as a minor component. Also found in spherical cytoplasmic structures, called virus factories, that appear early after infection and are the site of viral replication and packaging (By similarity).</text>
</comment>
<comment type="similarity">
    <text evidence="3">Belongs to the reoviridae RNA-directed RNA polymerase family.</text>
</comment>
<evidence type="ECO:0000250" key="1"/>
<evidence type="ECO:0000255" key="2">
    <source>
        <dbReference type="PROSITE-ProRule" id="PRU00539"/>
    </source>
</evidence>
<evidence type="ECO:0000305" key="3"/>
<name>RDRP_ROTPY</name>
<protein>
    <recommendedName>
        <fullName>RNA-directed RNA polymerase</fullName>
        <ecNumber>2.7.7.48</ecNumber>
    </recommendedName>
    <alternativeName>
        <fullName>Protein VP1</fullName>
    </alternativeName>
</protein>
<dbReference type="EC" id="2.7.7.48"/>
<dbReference type="EMBL" id="X76486">
    <property type="protein sequence ID" value="CAA54024.1"/>
    <property type="molecule type" value="mRNA"/>
</dbReference>
<dbReference type="PIR" id="S39261">
    <property type="entry name" value="S39261"/>
</dbReference>
<dbReference type="SMR" id="Q85036"/>
<dbReference type="GO" id="GO:0044423">
    <property type="term" value="C:virion component"/>
    <property type="evidence" value="ECO:0007669"/>
    <property type="project" value="UniProtKB-KW"/>
</dbReference>
<dbReference type="GO" id="GO:0000166">
    <property type="term" value="F:nucleotide binding"/>
    <property type="evidence" value="ECO:0007669"/>
    <property type="project" value="UniProtKB-KW"/>
</dbReference>
<dbReference type="GO" id="GO:0003723">
    <property type="term" value="F:RNA binding"/>
    <property type="evidence" value="ECO:0007669"/>
    <property type="project" value="UniProtKB-KW"/>
</dbReference>
<dbReference type="GO" id="GO:0003968">
    <property type="term" value="F:RNA-directed RNA polymerase activity"/>
    <property type="evidence" value="ECO:0007669"/>
    <property type="project" value="UniProtKB-KW"/>
</dbReference>
<dbReference type="GO" id="GO:0006351">
    <property type="term" value="P:DNA-templated transcription"/>
    <property type="evidence" value="ECO:0007669"/>
    <property type="project" value="InterPro"/>
</dbReference>
<dbReference type="GO" id="GO:0019079">
    <property type="term" value="P:viral genome replication"/>
    <property type="evidence" value="ECO:0007669"/>
    <property type="project" value="InterPro"/>
</dbReference>
<dbReference type="Gene3D" id="1.10.357.80">
    <property type="match status" value="2"/>
</dbReference>
<dbReference type="Gene3D" id="1.20.120.1390">
    <property type="match status" value="1"/>
</dbReference>
<dbReference type="Gene3D" id="3.30.230.140">
    <property type="match status" value="2"/>
</dbReference>
<dbReference type="Gene3D" id="3.30.70.2480">
    <property type="match status" value="1"/>
</dbReference>
<dbReference type="Gene3D" id="1.10.10.1990">
    <property type="entry name" value="Viral RNA-directed RNA polymerase, 4-helical domain"/>
    <property type="match status" value="1"/>
</dbReference>
<dbReference type="InterPro" id="IPR043502">
    <property type="entry name" value="DNA/RNA_pol_sf"/>
</dbReference>
<dbReference type="InterPro" id="IPR042032">
    <property type="entry name" value="RNA-dir_pol_4-hel_dom"/>
</dbReference>
<dbReference type="InterPro" id="IPR001795">
    <property type="entry name" value="RNA-dir_pol_luteovirus"/>
</dbReference>
<dbReference type="InterPro" id="IPR007097">
    <property type="entry name" value="RNA-dir_pol_reovirus"/>
</dbReference>
<dbReference type="InterPro" id="IPR022071">
    <property type="entry name" value="Rotavirus_VP1_C"/>
</dbReference>
<dbReference type="Pfam" id="PF02123">
    <property type="entry name" value="RdRP_4"/>
    <property type="match status" value="1"/>
</dbReference>
<dbReference type="Pfam" id="PF12289">
    <property type="entry name" value="Rotavirus_VP1"/>
    <property type="match status" value="1"/>
</dbReference>
<dbReference type="SUPFAM" id="SSF56672">
    <property type="entry name" value="DNA/RNA polymerases"/>
    <property type="match status" value="1"/>
</dbReference>
<dbReference type="PROSITE" id="PS50523">
    <property type="entry name" value="RDRP_DSRNA_REO"/>
    <property type="match status" value="1"/>
</dbReference>
<organism>
    <name type="scientific">Rotavirus A (strain RVA/Pig/Mexico/YM/1983/G11P9[7])</name>
    <name type="common">RV-A</name>
    <dbReference type="NCBI Taxonomy" id="10919"/>
    <lineage>
        <taxon>Viruses</taxon>
        <taxon>Riboviria</taxon>
        <taxon>Orthornavirae</taxon>
        <taxon>Duplornaviricota</taxon>
        <taxon>Resentoviricetes</taxon>
        <taxon>Reovirales</taxon>
        <taxon>Sedoreoviridae</taxon>
        <taxon>Rotavirus</taxon>
        <taxon>Rotavirus A</taxon>
    </lineage>
</organism>